<dbReference type="EC" id="1.-.-.-" evidence="7"/>
<dbReference type="EMBL" id="BA000051">
    <property type="protein sequence ID" value="BAE60008.1"/>
    <property type="molecule type" value="Genomic_DNA"/>
</dbReference>
<dbReference type="SMR" id="Q2UEK7"/>
<dbReference type="STRING" id="510516.Q2UEK7"/>
<dbReference type="GlyCosmos" id="Q2UEK7">
    <property type="glycosylation" value="4 sites, No reported glycans"/>
</dbReference>
<dbReference type="EnsemblFungi" id="BAE60008">
    <property type="protein sequence ID" value="BAE60008"/>
    <property type="gene ID" value="AO090026000579"/>
</dbReference>
<dbReference type="VEuPathDB" id="FungiDB:AO090026000579"/>
<dbReference type="HOGENOM" id="CLU_001570_2_1_1"/>
<dbReference type="OMA" id="MIYRMAM"/>
<dbReference type="UniPathway" id="UPA00213"/>
<dbReference type="Proteomes" id="UP000006564">
    <property type="component" value="Chromosome 3"/>
</dbReference>
<dbReference type="GO" id="GO:0016020">
    <property type="term" value="C:membrane"/>
    <property type="evidence" value="ECO:0007669"/>
    <property type="project" value="UniProtKB-SubCell"/>
</dbReference>
<dbReference type="GO" id="GO:0020037">
    <property type="term" value="F:heme binding"/>
    <property type="evidence" value="ECO:0007669"/>
    <property type="project" value="InterPro"/>
</dbReference>
<dbReference type="GO" id="GO:0005506">
    <property type="term" value="F:iron ion binding"/>
    <property type="evidence" value="ECO:0007669"/>
    <property type="project" value="InterPro"/>
</dbReference>
<dbReference type="GO" id="GO:0004497">
    <property type="term" value="F:monooxygenase activity"/>
    <property type="evidence" value="ECO:0007669"/>
    <property type="project" value="UniProtKB-KW"/>
</dbReference>
<dbReference type="GO" id="GO:0016705">
    <property type="term" value="F:oxidoreductase activity, acting on paired donors, with incorporation or reduction of molecular oxygen"/>
    <property type="evidence" value="ECO:0007669"/>
    <property type="project" value="InterPro"/>
</dbReference>
<dbReference type="GO" id="GO:0016114">
    <property type="term" value="P:terpenoid biosynthetic process"/>
    <property type="evidence" value="ECO:0007669"/>
    <property type="project" value="UniProtKB-UniPathway"/>
</dbReference>
<dbReference type="CDD" id="cd11065">
    <property type="entry name" value="CYP64-like"/>
    <property type="match status" value="1"/>
</dbReference>
<dbReference type="Gene3D" id="1.10.630.10">
    <property type="entry name" value="Cytochrome P450"/>
    <property type="match status" value="1"/>
</dbReference>
<dbReference type="InterPro" id="IPR001128">
    <property type="entry name" value="Cyt_P450"/>
</dbReference>
<dbReference type="InterPro" id="IPR017972">
    <property type="entry name" value="Cyt_P450_CS"/>
</dbReference>
<dbReference type="InterPro" id="IPR002401">
    <property type="entry name" value="Cyt_P450_E_grp-I"/>
</dbReference>
<dbReference type="InterPro" id="IPR036396">
    <property type="entry name" value="Cyt_P450_sf"/>
</dbReference>
<dbReference type="InterPro" id="IPR050364">
    <property type="entry name" value="Cytochrome_P450_fung"/>
</dbReference>
<dbReference type="PANTHER" id="PTHR46300:SF1">
    <property type="entry name" value="P450, PUTATIVE (EUROFUNG)-RELATED"/>
    <property type="match status" value="1"/>
</dbReference>
<dbReference type="PANTHER" id="PTHR46300">
    <property type="entry name" value="P450, PUTATIVE (EUROFUNG)-RELATED-RELATED"/>
    <property type="match status" value="1"/>
</dbReference>
<dbReference type="Pfam" id="PF00067">
    <property type="entry name" value="p450"/>
    <property type="match status" value="1"/>
</dbReference>
<dbReference type="PRINTS" id="PR00463">
    <property type="entry name" value="EP450I"/>
</dbReference>
<dbReference type="PRINTS" id="PR00385">
    <property type="entry name" value="P450"/>
</dbReference>
<dbReference type="SUPFAM" id="SSF48264">
    <property type="entry name" value="Cytochrome P450"/>
    <property type="match status" value="1"/>
</dbReference>
<dbReference type="PROSITE" id="PS00086">
    <property type="entry name" value="CYTOCHROME_P450"/>
    <property type="match status" value="1"/>
</dbReference>
<feature type="chain" id="PRO_0000450116" description="Cytochrome P450 monooxygenase astF">
    <location>
        <begin position="1"/>
        <end position="521"/>
    </location>
</feature>
<feature type="transmembrane region" description="Helical" evidence="2">
    <location>
        <begin position="14"/>
        <end position="34"/>
    </location>
</feature>
<feature type="binding site" description="axial binding residue" evidence="1">
    <location>
        <position position="430"/>
    </location>
    <ligand>
        <name>heme</name>
        <dbReference type="ChEBI" id="CHEBI:30413"/>
    </ligand>
    <ligandPart>
        <name>Fe</name>
        <dbReference type="ChEBI" id="CHEBI:18248"/>
    </ligandPart>
</feature>
<feature type="glycosylation site" description="N-linked (GlcNAc...) asparagine" evidence="3">
    <location>
        <position position="198"/>
    </location>
</feature>
<feature type="glycosylation site" description="N-linked (GlcNAc...) asparagine" evidence="3">
    <location>
        <position position="218"/>
    </location>
</feature>
<feature type="glycosylation site" description="N-linked (GlcNAc...) asparagine" evidence="3">
    <location>
        <position position="268"/>
    </location>
</feature>
<feature type="glycosylation site" description="N-linked (GlcNAc...) asparagine" evidence="3">
    <location>
        <position position="281"/>
    </location>
</feature>
<proteinExistence type="evidence at transcript level"/>
<gene>
    <name evidence="5" type="primary">astF</name>
    <name type="ORF">AO090026000579</name>
</gene>
<comment type="function">
    <text evidence="4">Cytochrome P450 monooxygenase; part of the gene cluster that mediates the biosynthesis of astellolides, drimane-type sesquiterpene esters that show antimicrobial, anti-inflammatory, and anti-tumor activities (PubMed:27628599). The first step in astellolide biosynthesis is performed by the sesquiterpene cyclase astC that catalyzes the formation of drimanyl pyrophosphate from farnesyl pyrophosphate (PubMed:27628599). Drimanyl pyrophosphate is then dephosphorylated by the sesquiterpene phosphatase astI to produce drimanyl monophosphate which is further dephosphorylated to drim-8-ene-11-ol by atsK (PubMed:27628599). Drim-8-ene-11-ol is converted to confertifolin, probably by the cytochrome P450 monooxygenase astD and/or the dehydrogenase astE (PubMed:27628599). The cytochrome P450 monooxygenases astB, astF and astJ then hydroxylate confertifolin at C6, C14, or C15 to form trihydroxy confertifolin (PubMed:27628599). The nonribosomal peptide synthetase astA catalyzes ester bond formation between trihydroxy contifolin and benzoic acid (BA) or 4-hydroxy benzoic acid (4HBA), leading to the formation of dideacetyl astellolides A and B, respectively (PubMed:27628599). Finally, the O-acetyltransferase astG converts dideacetyl astellolides A and B into deacetyl astellolides A and B (PubMed:27628599).</text>
</comment>
<comment type="cofactor">
    <cofactor evidence="1">
        <name>heme</name>
        <dbReference type="ChEBI" id="CHEBI:30413"/>
    </cofactor>
</comment>
<comment type="pathway">
    <text evidence="4">Secondary metabolite biosynthesis; terpenoid biosynthesis.</text>
</comment>
<comment type="subcellular location">
    <subcellularLocation>
        <location evidence="2">Membrane</location>
        <topology evidence="2">Single-pass membrane protein</topology>
    </subcellularLocation>
</comment>
<comment type="induction">
    <text evidence="4">Expression is regulated by the secondary metabolite regulator cclA.</text>
</comment>
<comment type="disruption phenotype">
    <text evidence="4">Impairs the production of trihydroxy confertifolin and deacetyl astellolides A and B.</text>
</comment>
<comment type="similarity">
    <text evidence="6">Belongs to the cytochrome P450 family.</text>
</comment>
<name>ASTF_ASPOR</name>
<keyword id="KW-0325">Glycoprotein</keyword>
<keyword id="KW-0349">Heme</keyword>
<keyword id="KW-0408">Iron</keyword>
<keyword id="KW-0472">Membrane</keyword>
<keyword id="KW-0479">Metal-binding</keyword>
<keyword id="KW-0503">Monooxygenase</keyword>
<keyword id="KW-0560">Oxidoreductase</keyword>
<keyword id="KW-1185">Reference proteome</keyword>
<keyword id="KW-0812">Transmembrane</keyword>
<keyword id="KW-1133">Transmembrane helix</keyword>
<accession>Q2UEK7</accession>
<evidence type="ECO:0000250" key="1">
    <source>
        <dbReference type="UniProtKB" id="P04798"/>
    </source>
</evidence>
<evidence type="ECO:0000255" key="2"/>
<evidence type="ECO:0000255" key="3">
    <source>
        <dbReference type="PROSITE-ProRule" id="PRU00498"/>
    </source>
</evidence>
<evidence type="ECO:0000269" key="4">
    <source>
    </source>
</evidence>
<evidence type="ECO:0000303" key="5">
    <source>
    </source>
</evidence>
<evidence type="ECO:0000305" key="6"/>
<evidence type="ECO:0000305" key="7">
    <source>
    </source>
</evidence>
<sequence length="521" mass="59544">MLPTLPNIAGRINTMATFLLPVAIGTIILLFLYGKYVTSTLIPGPPTLPLIGNLHQLPSDDRRHVLAQWHKKHGPIISLKFGWSSVVILGNIAVTKELFGKRSLKYGSRPRMVMARDCMTKQMQTSTLPWGEKWKIHNRIQLSLVGGPKIRSYQSLLDIESCKVLYQLLSTESLVTCFNRFKFNIIYTLAYGKDPDQNESDFHEILELADHFTQTLTNATWVVDLFPILNCLPRRLAPWKAVGDDFHRRAMGWFRRNSEAAVKSNSWNWTKHVQFNEDTGNLSVSEMQYLIGVLFEAGVDSTATVLHFFVLACTLYPDAVTKARQELDKVVGSARLPTPKDLPQLPYVKAFIQEVLRWRPITAEGLPHFTLEDDKYQGYDIPKGSTVIFNYWSGHMDEDTYQHADQFCPERWIERPDLPLGVFGYGRRACAGRRLALMSLETLIPKLLWAFDFRSPAGTDHGKSRDPGTEHQGALIKPRSFPVSWHPVSNDRRLIIERLFQERDKDLDTVLDDIGKAFERY</sequence>
<protein>
    <recommendedName>
        <fullName evidence="5">Cytochrome P450 monooxygenase astF</fullName>
        <ecNumber evidence="7">1.-.-.-</ecNumber>
    </recommendedName>
    <alternativeName>
        <fullName evidence="5">Astellolide biosynthesis cluster protein F</fullName>
    </alternativeName>
</protein>
<organism>
    <name type="scientific">Aspergillus oryzae (strain ATCC 42149 / RIB 40)</name>
    <name type="common">Yellow koji mold</name>
    <dbReference type="NCBI Taxonomy" id="510516"/>
    <lineage>
        <taxon>Eukaryota</taxon>
        <taxon>Fungi</taxon>
        <taxon>Dikarya</taxon>
        <taxon>Ascomycota</taxon>
        <taxon>Pezizomycotina</taxon>
        <taxon>Eurotiomycetes</taxon>
        <taxon>Eurotiomycetidae</taxon>
        <taxon>Eurotiales</taxon>
        <taxon>Aspergillaceae</taxon>
        <taxon>Aspergillus</taxon>
        <taxon>Aspergillus subgen. Circumdati</taxon>
    </lineage>
</organism>
<reference key="1">
    <citation type="journal article" date="2005" name="Nature">
        <title>Genome sequencing and analysis of Aspergillus oryzae.</title>
        <authorList>
            <person name="Machida M."/>
            <person name="Asai K."/>
            <person name="Sano M."/>
            <person name="Tanaka T."/>
            <person name="Kumagai T."/>
            <person name="Terai G."/>
            <person name="Kusumoto K."/>
            <person name="Arima T."/>
            <person name="Akita O."/>
            <person name="Kashiwagi Y."/>
            <person name="Abe K."/>
            <person name="Gomi K."/>
            <person name="Horiuchi H."/>
            <person name="Kitamoto K."/>
            <person name="Kobayashi T."/>
            <person name="Takeuchi M."/>
            <person name="Denning D.W."/>
            <person name="Galagan J.E."/>
            <person name="Nierman W.C."/>
            <person name="Yu J."/>
            <person name="Archer D.B."/>
            <person name="Bennett J.W."/>
            <person name="Bhatnagar D."/>
            <person name="Cleveland T.E."/>
            <person name="Fedorova N.D."/>
            <person name="Gotoh O."/>
            <person name="Horikawa H."/>
            <person name="Hosoyama A."/>
            <person name="Ichinomiya M."/>
            <person name="Igarashi R."/>
            <person name="Iwashita K."/>
            <person name="Juvvadi P.R."/>
            <person name="Kato M."/>
            <person name="Kato Y."/>
            <person name="Kin T."/>
            <person name="Kokubun A."/>
            <person name="Maeda H."/>
            <person name="Maeyama N."/>
            <person name="Maruyama J."/>
            <person name="Nagasaki H."/>
            <person name="Nakajima T."/>
            <person name="Oda K."/>
            <person name="Okada K."/>
            <person name="Paulsen I."/>
            <person name="Sakamoto K."/>
            <person name="Sawano T."/>
            <person name="Takahashi M."/>
            <person name="Takase K."/>
            <person name="Terabayashi Y."/>
            <person name="Wortman J.R."/>
            <person name="Yamada O."/>
            <person name="Yamagata Y."/>
            <person name="Anazawa H."/>
            <person name="Hata Y."/>
            <person name="Koide Y."/>
            <person name="Komori T."/>
            <person name="Koyama Y."/>
            <person name="Minetoki T."/>
            <person name="Suharnan S."/>
            <person name="Tanaka A."/>
            <person name="Isono K."/>
            <person name="Kuhara S."/>
            <person name="Ogasawara N."/>
            <person name="Kikuchi H."/>
        </authorList>
    </citation>
    <scope>NUCLEOTIDE SEQUENCE [LARGE SCALE GENOMIC DNA]</scope>
    <source>
        <strain>ATCC 42149 / RIB 40</strain>
    </source>
</reference>
<reference key="2">
    <citation type="journal article" date="2016" name="Sci. Rep.">
        <title>Identification of a novel sesquiterpene biosynthetic machinery involved in astellolide biosynthesis.</title>
        <authorList>
            <person name="Shinohara Y."/>
            <person name="Takahashi S."/>
            <person name="Osada H."/>
            <person name="Koyama Y."/>
        </authorList>
    </citation>
    <scope>INDUCTION</scope>
    <scope>FUNCTION</scope>
    <scope>DISRUPTION PHENOTYPE</scope>
    <scope>PATHWAY</scope>
</reference>